<dbReference type="EMBL" id="CP000270">
    <property type="protein sequence ID" value="ABE32631.1"/>
    <property type="molecule type" value="Genomic_DNA"/>
</dbReference>
<dbReference type="RefSeq" id="WP_007180146.1">
    <property type="nucleotide sequence ID" value="NZ_CP008760.1"/>
</dbReference>
<dbReference type="SMR" id="Q13TF8"/>
<dbReference type="STRING" id="266265.Bxe_A0302"/>
<dbReference type="GeneID" id="97038541"/>
<dbReference type="KEGG" id="bxb:DR64_2472"/>
<dbReference type="KEGG" id="bxe:Bxe_A0302"/>
<dbReference type="eggNOG" id="COG0080">
    <property type="taxonomic scope" value="Bacteria"/>
</dbReference>
<dbReference type="OrthoDB" id="9802408at2"/>
<dbReference type="Proteomes" id="UP000001817">
    <property type="component" value="Chromosome 1"/>
</dbReference>
<dbReference type="GO" id="GO:0022625">
    <property type="term" value="C:cytosolic large ribosomal subunit"/>
    <property type="evidence" value="ECO:0007669"/>
    <property type="project" value="TreeGrafter"/>
</dbReference>
<dbReference type="GO" id="GO:0070180">
    <property type="term" value="F:large ribosomal subunit rRNA binding"/>
    <property type="evidence" value="ECO:0007669"/>
    <property type="project" value="UniProtKB-UniRule"/>
</dbReference>
<dbReference type="GO" id="GO:0003735">
    <property type="term" value="F:structural constituent of ribosome"/>
    <property type="evidence" value="ECO:0007669"/>
    <property type="project" value="InterPro"/>
</dbReference>
<dbReference type="GO" id="GO:0006412">
    <property type="term" value="P:translation"/>
    <property type="evidence" value="ECO:0007669"/>
    <property type="project" value="UniProtKB-UniRule"/>
</dbReference>
<dbReference type="CDD" id="cd00349">
    <property type="entry name" value="Ribosomal_L11"/>
    <property type="match status" value="1"/>
</dbReference>
<dbReference type="FunFam" id="1.10.10.250:FF:000001">
    <property type="entry name" value="50S ribosomal protein L11"/>
    <property type="match status" value="1"/>
</dbReference>
<dbReference type="FunFam" id="3.30.1550.10:FF:000001">
    <property type="entry name" value="50S ribosomal protein L11"/>
    <property type="match status" value="1"/>
</dbReference>
<dbReference type="Gene3D" id="1.10.10.250">
    <property type="entry name" value="Ribosomal protein L11, C-terminal domain"/>
    <property type="match status" value="1"/>
</dbReference>
<dbReference type="Gene3D" id="3.30.1550.10">
    <property type="entry name" value="Ribosomal protein L11/L12, N-terminal domain"/>
    <property type="match status" value="1"/>
</dbReference>
<dbReference type="HAMAP" id="MF_00736">
    <property type="entry name" value="Ribosomal_uL11"/>
    <property type="match status" value="1"/>
</dbReference>
<dbReference type="InterPro" id="IPR000911">
    <property type="entry name" value="Ribosomal_uL11"/>
</dbReference>
<dbReference type="InterPro" id="IPR006519">
    <property type="entry name" value="Ribosomal_uL11_bac-typ"/>
</dbReference>
<dbReference type="InterPro" id="IPR020783">
    <property type="entry name" value="Ribosomal_uL11_C"/>
</dbReference>
<dbReference type="InterPro" id="IPR036769">
    <property type="entry name" value="Ribosomal_uL11_C_sf"/>
</dbReference>
<dbReference type="InterPro" id="IPR020785">
    <property type="entry name" value="Ribosomal_uL11_CS"/>
</dbReference>
<dbReference type="InterPro" id="IPR020784">
    <property type="entry name" value="Ribosomal_uL11_N"/>
</dbReference>
<dbReference type="InterPro" id="IPR036796">
    <property type="entry name" value="Ribosomal_uL11_N_sf"/>
</dbReference>
<dbReference type="NCBIfam" id="TIGR01632">
    <property type="entry name" value="L11_bact"/>
    <property type="match status" value="1"/>
</dbReference>
<dbReference type="PANTHER" id="PTHR11661">
    <property type="entry name" value="60S RIBOSOMAL PROTEIN L12"/>
    <property type="match status" value="1"/>
</dbReference>
<dbReference type="PANTHER" id="PTHR11661:SF1">
    <property type="entry name" value="LARGE RIBOSOMAL SUBUNIT PROTEIN UL11M"/>
    <property type="match status" value="1"/>
</dbReference>
<dbReference type="Pfam" id="PF00298">
    <property type="entry name" value="Ribosomal_L11"/>
    <property type="match status" value="1"/>
</dbReference>
<dbReference type="Pfam" id="PF03946">
    <property type="entry name" value="Ribosomal_L11_N"/>
    <property type="match status" value="1"/>
</dbReference>
<dbReference type="SMART" id="SM00649">
    <property type="entry name" value="RL11"/>
    <property type="match status" value="1"/>
</dbReference>
<dbReference type="SUPFAM" id="SSF54747">
    <property type="entry name" value="Ribosomal L11/L12e N-terminal domain"/>
    <property type="match status" value="1"/>
</dbReference>
<dbReference type="SUPFAM" id="SSF46906">
    <property type="entry name" value="Ribosomal protein L11, C-terminal domain"/>
    <property type="match status" value="1"/>
</dbReference>
<dbReference type="PROSITE" id="PS00359">
    <property type="entry name" value="RIBOSOMAL_L11"/>
    <property type="match status" value="1"/>
</dbReference>
<accession>Q13TF8</accession>
<name>RL11_PARXL</name>
<comment type="function">
    <text evidence="1">Forms part of the ribosomal stalk which helps the ribosome interact with GTP-bound translation factors.</text>
</comment>
<comment type="subunit">
    <text evidence="1">Part of the ribosomal stalk of the 50S ribosomal subunit. Interacts with L10 and the large rRNA to form the base of the stalk. L10 forms an elongated spine to which L12 dimers bind in a sequential fashion forming a multimeric L10(L12)X complex.</text>
</comment>
<comment type="PTM">
    <text evidence="1">One or more lysine residues are methylated.</text>
</comment>
<comment type="similarity">
    <text evidence="1">Belongs to the universal ribosomal protein uL11 family.</text>
</comment>
<keyword id="KW-0488">Methylation</keyword>
<keyword id="KW-1185">Reference proteome</keyword>
<keyword id="KW-0687">Ribonucleoprotein</keyword>
<keyword id="KW-0689">Ribosomal protein</keyword>
<keyword id="KW-0694">RNA-binding</keyword>
<keyword id="KW-0699">rRNA-binding</keyword>
<proteinExistence type="inferred from homology"/>
<sequence>MAKKIIGFIKLQIPAGKANPSPPVGPALGQRGLNIMEFCKAFNAQTQALEPGLPIPVVITAFADKSFTFVLKTPPATVLIKKAAKIDKGSSKPHTDKVGKITRAQAEDIAKTKMPDLTAADLDAAVRTIAGSARSMGITVEGV</sequence>
<gene>
    <name evidence="1" type="primary">rplK</name>
    <name type="ordered locus">Bxeno_A4093</name>
    <name type="ORF">Bxe_A0302</name>
</gene>
<organism>
    <name type="scientific">Paraburkholderia xenovorans (strain LB400)</name>
    <dbReference type="NCBI Taxonomy" id="266265"/>
    <lineage>
        <taxon>Bacteria</taxon>
        <taxon>Pseudomonadati</taxon>
        <taxon>Pseudomonadota</taxon>
        <taxon>Betaproteobacteria</taxon>
        <taxon>Burkholderiales</taxon>
        <taxon>Burkholderiaceae</taxon>
        <taxon>Paraburkholderia</taxon>
    </lineage>
</organism>
<feature type="chain" id="PRO_0000258132" description="Large ribosomal subunit protein uL11">
    <location>
        <begin position="1"/>
        <end position="143"/>
    </location>
</feature>
<protein>
    <recommendedName>
        <fullName evidence="1">Large ribosomal subunit protein uL11</fullName>
    </recommendedName>
    <alternativeName>
        <fullName evidence="2">50S ribosomal protein L11</fullName>
    </alternativeName>
</protein>
<evidence type="ECO:0000255" key="1">
    <source>
        <dbReference type="HAMAP-Rule" id="MF_00736"/>
    </source>
</evidence>
<evidence type="ECO:0000305" key="2"/>
<reference key="1">
    <citation type="journal article" date="2006" name="Proc. Natl. Acad. Sci. U.S.A.">
        <title>Burkholderia xenovorans LB400 harbors a multi-replicon, 9.73-Mbp genome shaped for versatility.</title>
        <authorList>
            <person name="Chain P.S.G."/>
            <person name="Denef V.J."/>
            <person name="Konstantinidis K.T."/>
            <person name="Vergez L.M."/>
            <person name="Agullo L."/>
            <person name="Reyes V.L."/>
            <person name="Hauser L."/>
            <person name="Cordova M."/>
            <person name="Gomez L."/>
            <person name="Gonzalez M."/>
            <person name="Land M."/>
            <person name="Lao V."/>
            <person name="Larimer F."/>
            <person name="LiPuma J.J."/>
            <person name="Mahenthiralingam E."/>
            <person name="Malfatti S.A."/>
            <person name="Marx C.J."/>
            <person name="Parnell J.J."/>
            <person name="Ramette A."/>
            <person name="Richardson P."/>
            <person name="Seeger M."/>
            <person name="Smith D."/>
            <person name="Spilker T."/>
            <person name="Sul W.J."/>
            <person name="Tsoi T.V."/>
            <person name="Ulrich L.E."/>
            <person name="Zhulin I.B."/>
            <person name="Tiedje J.M."/>
        </authorList>
    </citation>
    <scope>NUCLEOTIDE SEQUENCE [LARGE SCALE GENOMIC DNA]</scope>
    <source>
        <strain>LB400</strain>
    </source>
</reference>